<feature type="chain" id="PRO_0000059992" description="Sulfate transport system permease protein CysT">
    <location>
        <begin position="1"/>
        <end position="286"/>
    </location>
</feature>
<feature type="transmembrane region" description="Helical" evidence="2">
    <location>
        <begin position="27"/>
        <end position="47"/>
    </location>
</feature>
<feature type="transmembrane region" description="Helical" evidence="2">
    <location>
        <begin position="74"/>
        <end position="94"/>
    </location>
</feature>
<feature type="transmembrane region" description="Helical" evidence="2">
    <location>
        <begin position="108"/>
        <end position="128"/>
    </location>
</feature>
<feature type="transmembrane region" description="Helical" evidence="2">
    <location>
        <begin position="146"/>
        <end position="166"/>
    </location>
</feature>
<feature type="transmembrane region" description="Helical" evidence="2">
    <location>
        <begin position="195"/>
        <end position="215"/>
    </location>
</feature>
<feature type="transmembrane region" description="Helical" evidence="2">
    <location>
        <begin position="224"/>
        <end position="244"/>
    </location>
</feature>
<feature type="transmembrane region" description="Helical" evidence="2">
    <location>
        <begin position="257"/>
        <end position="276"/>
    </location>
</feature>
<feature type="domain" description="ABC transmembrane type-1" evidence="2">
    <location>
        <begin position="70"/>
        <end position="273"/>
    </location>
</feature>
<organism>
    <name type="scientific">Synechocystis sp. (strain ATCC 27184 / PCC 6803 / Kazusa)</name>
    <dbReference type="NCBI Taxonomy" id="1111708"/>
    <lineage>
        <taxon>Bacteria</taxon>
        <taxon>Bacillati</taxon>
        <taxon>Cyanobacteriota</taxon>
        <taxon>Cyanophyceae</taxon>
        <taxon>Synechococcales</taxon>
        <taxon>Merismopediaceae</taxon>
        <taxon>Synechocystis</taxon>
    </lineage>
</organism>
<evidence type="ECO:0000250" key="1"/>
<evidence type="ECO:0000255" key="2">
    <source>
        <dbReference type="PROSITE-ProRule" id="PRU00441"/>
    </source>
</evidence>
<evidence type="ECO:0000305" key="3"/>
<gene>
    <name type="primary">cysT</name>
    <name type="ordered locus">slr1453</name>
</gene>
<sequence>MTTNLPFSSPSKQLNRFSFWQSISIPWVVTIIYLLLILVLPIAALLVKSASLGLEGFWQIATTPIAISTYNVTFITALAAGLVNGVMGTLVAWVLVRCQFPGKKIVDAMVDLPFALPTSVAGLVLATLYSQTGWVGRFFAPFGIQIAFSRLGVFVAMVFISLPFIVRTLQPVLQELEEEAEEAAWSLGATEFQTFWRVIFPPLIPPILTGIALGFSRAVGEYGSVVLIASNIPFKDLIAPVLVFERLEQYDYPAATVIGAVLLSVSLILLLIINLLQQWGRRYAND</sequence>
<accession>Q01895</accession>
<comment type="function">
    <text evidence="1">Part of the ABC transporter complex CysAWTP (TC 3.A.1.6.1) involved in sulfate/thiosulfate import. Probably responsible for the translocation of the substrate across the membrane (By similarity).</text>
</comment>
<comment type="subunit">
    <text evidence="3">The complex is composed of two ATP-binding proteins (CysA), two transmembrane proteins (CysT and CysW) and a solute-binding protein (CysP).</text>
</comment>
<comment type="subcellular location">
    <subcellularLocation>
        <location evidence="1">Cell inner membrane</location>
        <topology evidence="2">Multi-pass membrane protein</topology>
    </subcellularLocation>
</comment>
<comment type="induction">
    <text>By sulfur deprivation.</text>
</comment>
<comment type="similarity">
    <text evidence="3">Belongs to the binding-protein-dependent transport system permease family. CysTW subfamily.</text>
</comment>
<reference key="1">
    <citation type="journal article" date="1996" name="DNA Res.">
        <title>Sequence analysis of the genome of the unicellular cyanobacterium Synechocystis sp. strain PCC6803. II. Sequence determination of the entire genome and assignment of potential protein-coding regions.</title>
        <authorList>
            <person name="Kaneko T."/>
            <person name="Sato S."/>
            <person name="Kotani H."/>
            <person name="Tanaka A."/>
            <person name="Asamizu E."/>
            <person name="Nakamura Y."/>
            <person name="Miyajima N."/>
            <person name="Hirosawa M."/>
            <person name="Sugiura M."/>
            <person name="Sasamoto S."/>
            <person name="Kimura T."/>
            <person name="Hosouchi T."/>
            <person name="Matsuno A."/>
            <person name="Muraki A."/>
            <person name="Nakazaki N."/>
            <person name="Naruo K."/>
            <person name="Okumura S."/>
            <person name="Shimpo S."/>
            <person name="Takeuchi C."/>
            <person name="Wada T."/>
            <person name="Watanabe A."/>
            <person name="Yamada M."/>
            <person name="Yasuda M."/>
            <person name="Tabata S."/>
        </authorList>
    </citation>
    <scope>NUCLEOTIDE SEQUENCE [LARGE SCALE GENOMIC DNA]</scope>
    <source>
        <strain>ATCC 27184 / PCC 6803 / Kazusa</strain>
    </source>
</reference>
<reference key="2">
    <citation type="journal article" date="1993" name="Plant Mol. Biol.">
        <title>Nucleotide sequence and homology comparison of two genes of the sulfate transport operon from the cyanobacterium Synechocystis sp. PCC 6803.</title>
        <authorList>
            <person name="Kohn C."/>
            <person name="Schumann J."/>
        </authorList>
    </citation>
    <scope>NUCLEOTIDE SEQUENCE [GENOMIC DNA] OF 1-235</scope>
</reference>
<protein>
    <recommendedName>
        <fullName>Sulfate transport system permease protein CysT</fullName>
    </recommendedName>
</protein>
<keyword id="KW-0997">Cell inner membrane</keyword>
<keyword id="KW-1003">Cell membrane</keyword>
<keyword id="KW-0472">Membrane</keyword>
<keyword id="KW-1185">Reference proteome</keyword>
<keyword id="KW-0346">Stress response</keyword>
<keyword id="KW-0764">Sulfate transport</keyword>
<keyword id="KW-0812">Transmembrane</keyword>
<keyword id="KW-1133">Transmembrane helix</keyword>
<keyword id="KW-0813">Transport</keyword>
<name>CYST_SYNY3</name>
<dbReference type="EMBL" id="BA000022">
    <property type="protein sequence ID" value="BAA18653.1"/>
    <property type="molecule type" value="Genomic_DNA"/>
</dbReference>
<dbReference type="EMBL" id="X67911">
    <property type="protein sequence ID" value="CAA48111.1"/>
    <property type="molecule type" value="Genomic_DNA"/>
</dbReference>
<dbReference type="PIR" id="S76741">
    <property type="entry name" value="S76741"/>
</dbReference>
<dbReference type="SMR" id="Q01895"/>
<dbReference type="FunCoup" id="Q01895">
    <property type="interactions" value="234"/>
</dbReference>
<dbReference type="STRING" id="1148.gene:10500419"/>
<dbReference type="PaxDb" id="1148-1653742"/>
<dbReference type="EnsemblBacteria" id="BAA18653">
    <property type="protein sequence ID" value="BAA18653"/>
    <property type="gene ID" value="BAA18653"/>
</dbReference>
<dbReference type="KEGG" id="syn:slr1453"/>
<dbReference type="eggNOG" id="COG0555">
    <property type="taxonomic scope" value="Bacteria"/>
</dbReference>
<dbReference type="InParanoid" id="Q01895"/>
<dbReference type="PhylomeDB" id="Q01895"/>
<dbReference type="Proteomes" id="UP000001425">
    <property type="component" value="Chromosome"/>
</dbReference>
<dbReference type="GO" id="GO:0005886">
    <property type="term" value="C:plasma membrane"/>
    <property type="evidence" value="ECO:0000318"/>
    <property type="project" value="GO_Central"/>
</dbReference>
<dbReference type="GO" id="GO:0015419">
    <property type="term" value="F:ABC-type sulfate transporter activity"/>
    <property type="evidence" value="ECO:0007669"/>
    <property type="project" value="InterPro"/>
</dbReference>
<dbReference type="CDD" id="cd06261">
    <property type="entry name" value="TM_PBP2"/>
    <property type="match status" value="1"/>
</dbReference>
<dbReference type="FunFam" id="1.10.3720.10:FF:000004">
    <property type="entry name" value="Sulfate transport system permease protein CysT"/>
    <property type="match status" value="1"/>
</dbReference>
<dbReference type="Gene3D" id="1.10.3720.10">
    <property type="entry name" value="MetI-like"/>
    <property type="match status" value="1"/>
</dbReference>
<dbReference type="InterPro" id="IPR011865">
    <property type="entry name" value="CysT_permease"/>
</dbReference>
<dbReference type="InterPro" id="IPR000515">
    <property type="entry name" value="MetI-like"/>
</dbReference>
<dbReference type="InterPro" id="IPR035906">
    <property type="entry name" value="MetI-like_sf"/>
</dbReference>
<dbReference type="InterPro" id="IPR005667">
    <property type="entry name" value="Sulph_transpt2"/>
</dbReference>
<dbReference type="NCBIfam" id="TIGR00969">
    <property type="entry name" value="3a0106s02"/>
    <property type="match status" value="1"/>
</dbReference>
<dbReference type="NCBIfam" id="TIGR02139">
    <property type="entry name" value="permease_CysT"/>
    <property type="match status" value="1"/>
</dbReference>
<dbReference type="PANTHER" id="PTHR30406">
    <property type="entry name" value="SULFATE TRANSPORT SYSTEM PERMEASE PROTEIN"/>
    <property type="match status" value="1"/>
</dbReference>
<dbReference type="PANTHER" id="PTHR30406:SF8">
    <property type="entry name" value="SULFATE TRANSPORT SYSTEM PERMEASE PROTEIN CYST"/>
    <property type="match status" value="1"/>
</dbReference>
<dbReference type="Pfam" id="PF00528">
    <property type="entry name" value="BPD_transp_1"/>
    <property type="match status" value="1"/>
</dbReference>
<dbReference type="SUPFAM" id="SSF161098">
    <property type="entry name" value="MetI-like"/>
    <property type="match status" value="1"/>
</dbReference>
<dbReference type="PROSITE" id="PS50928">
    <property type="entry name" value="ABC_TM1"/>
    <property type="match status" value="1"/>
</dbReference>
<proteinExistence type="evidence at transcript level"/>